<name>PEPM_STRHY</name>
<feature type="chain" id="PRO_0000068825" description="Phosphoenolpyruvate phosphomutase">
    <location>
        <begin position="1"/>
        <end position="313"/>
    </location>
</feature>
<feature type="active site" description="Nucleophile" evidence="1">
    <location>
        <position position="69"/>
    </location>
</feature>
<comment type="function">
    <text>Formation of a carbon-phosphorus bond by converting phosphoenolpyruvate (PEP) to phosphonopyruvate (P-Pyr).</text>
</comment>
<comment type="catalytic activity">
    <reaction>
        <text>phosphoenolpyruvate + H(+) = 3-phosphonopyruvate</text>
        <dbReference type="Rhea" id="RHEA:17013"/>
        <dbReference type="ChEBI" id="CHEBI:15378"/>
        <dbReference type="ChEBI" id="CHEBI:58702"/>
        <dbReference type="ChEBI" id="CHEBI:71402"/>
        <dbReference type="EC" id="5.4.2.9"/>
    </reaction>
</comment>
<comment type="pathway">
    <text>Secondary metabolite biosynthesis; bialaphos biosynthesis.</text>
</comment>
<comment type="similarity">
    <text evidence="2">Belongs to the isocitrate lyase/PEP mutase superfamily. PEP mutase family.</text>
</comment>
<accession>P29247</accession>
<keyword id="KW-0045">Antibiotic biosynthesis</keyword>
<keyword id="KW-0413">Isomerase</keyword>
<gene>
    <name type="primary">bcpB</name>
</gene>
<proteinExistence type="inferred from homology"/>
<evidence type="ECO:0000255" key="1"/>
<evidence type="ECO:0000305" key="2"/>
<dbReference type="EC" id="5.4.2.9"/>
<dbReference type="EMBL" id="D10016">
    <property type="protein sequence ID" value="BAA00905.1"/>
    <property type="molecule type" value="Genomic_DNA"/>
</dbReference>
<dbReference type="PIR" id="S27698">
    <property type="entry name" value="S27698"/>
</dbReference>
<dbReference type="SMR" id="P29247"/>
<dbReference type="UniPathway" id="UPA00197"/>
<dbReference type="GO" id="GO:0050188">
    <property type="term" value="F:phosphoenolpyruvate mutase activity"/>
    <property type="evidence" value="ECO:0007669"/>
    <property type="project" value="UniProtKB-EC"/>
</dbReference>
<dbReference type="GO" id="GO:0017000">
    <property type="term" value="P:antibiotic biosynthetic process"/>
    <property type="evidence" value="ECO:0007669"/>
    <property type="project" value="UniProtKB-KW"/>
</dbReference>
<dbReference type="CDD" id="cd00377">
    <property type="entry name" value="ICL_PEPM"/>
    <property type="match status" value="1"/>
</dbReference>
<dbReference type="Gene3D" id="3.20.20.60">
    <property type="entry name" value="Phosphoenolpyruvate-binding domains"/>
    <property type="match status" value="1"/>
</dbReference>
<dbReference type="InterPro" id="IPR039556">
    <property type="entry name" value="ICL/PEPM"/>
</dbReference>
<dbReference type="InterPro" id="IPR012698">
    <property type="entry name" value="PEnolPyrv_PMutase_core"/>
</dbReference>
<dbReference type="InterPro" id="IPR015813">
    <property type="entry name" value="Pyrv/PenolPyrv_kinase-like_dom"/>
</dbReference>
<dbReference type="InterPro" id="IPR040442">
    <property type="entry name" value="Pyrv_kinase-like_dom_sf"/>
</dbReference>
<dbReference type="NCBIfam" id="TIGR02320">
    <property type="entry name" value="PEP_mutase"/>
    <property type="match status" value="1"/>
</dbReference>
<dbReference type="PANTHER" id="PTHR42905">
    <property type="entry name" value="PHOSPHOENOLPYRUVATE CARBOXYLASE"/>
    <property type="match status" value="1"/>
</dbReference>
<dbReference type="PANTHER" id="PTHR42905:SF7">
    <property type="entry name" value="PHOSPHOENOLPYRUVATE PHOSPHOMUTASE"/>
    <property type="match status" value="1"/>
</dbReference>
<dbReference type="Pfam" id="PF13714">
    <property type="entry name" value="PEP_mutase"/>
    <property type="match status" value="1"/>
</dbReference>
<dbReference type="SUPFAM" id="SSF51621">
    <property type="entry name" value="Phosphoenolpyruvate/pyruvate domain"/>
    <property type="match status" value="1"/>
</dbReference>
<reference key="1">
    <citation type="journal article" date="1992" name="J. Antibiot.">
        <title>Studies on the biosynthesis of bialaphos (SF-1293). 14. Nucleotide sequence of phosphoenolpyruvate phosphomutase gene isolated from a bialaphos producing organism, Streptomyces hygroscopicus, and its expression in Streptomyces lividans.</title>
        <authorList>
            <person name="Hidaka T."/>
            <person name="Hidaka M."/>
            <person name="Seto H."/>
        </authorList>
    </citation>
    <scope>NUCLEOTIDE SEQUENCE [GENOMIC DNA]</scope>
    <source>
        <strain>ATCC 21705 / DSM 41527 / SF-1293</strain>
    </source>
</reference>
<sequence>MNATEQAANGDRGTTRSAGGRLRYLLHAPGACQLMGVHDGLSARIAVAEGFEALWASGLCMSTARGVRDSDEASWTELLTLVGTMTDAVPGVPVLVDGDTGYGNFNTARRFAGRAERVGAAGVCFEDKVFPKMNSFFGDGHQLAPVAEFCGKIRACKDAQRDPDFVVVARTEALISKLPMEEALDRAAAYAEAGADALFIHSRMNTPQQIATFMERWEGSTPVLIAPTTYHTPSVDDFAALGIAGCIWANHSMRAAFAAMRDVCQRIRTDRGIYGIEDQVAPLKEIFGLFDYEGLEKDENCYTQAPDLAAVQG</sequence>
<organism>
    <name type="scientific">Streptomyces hygroscopicus</name>
    <dbReference type="NCBI Taxonomy" id="1912"/>
    <lineage>
        <taxon>Bacteria</taxon>
        <taxon>Bacillati</taxon>
        <taxon>Actinomycetota</taxon>
        <taxon>Actinomycetes</taxon>
        <taxon>Kitasatosporales</taxon>
        <taxon>Streptomycetaceae</taxon>
        <taxon>Streptomyces</taxon>
        <taxon>Streptomyces violaceusniger group</taxon>
    </lineage>
</organism>
<protein>
    <recommendedName>
        <fullName>Phosphoenolpyruvate phosphomutase</fullName>
        <shortName>PEP mutase</shortName>
        <shortName>PEP phosphomutase</shortName>
        <shortName>Phosphoenolpyruvate mutase</shortName>
        <ecNumber>5.4.2.9</ecNumber>
    </recommendedName>
</protein>